<comment type="function">
    <text evidence="1">One of the primary rRNA binding proteins. Required for association of the 30S and 50S subunits to form the 70S ribosome, for tRNA binding and peptide bond formation. It has been suggested to have peptidyltransferase activity; this is somewhat controversial. Makes several contacts with the 16S rRNA in the 70S ribosome.</text>
</comment>
<comment type="subunit">
    <text evidence="1">Part of the 50S ribosomal subunit. Forms a bridge to the 30S subunit in the 70S ribosome.</text>
</comment>
<comment type="similarity">
    <text evidence="1">Belongs to the universal ribosomal protein uL2 family.</text>
</comment>
<feature type="chain" id="PRO_0000129652" description="Large ribosomal subunit protein uL2">
    <location>
        <begin position="1"/>
        <end position="275"/>
    </location>
</feature>
<feature type="region of interest" description="Disordered" evidence="2">
    <location>
        <begin position="220"/>
        <end position="275"/>
    </location>
</feature>
<feature type="compositionally biased region" description="Basic residues" evidence="2">
    <location>
        <begin position="257"/>
        <end position="275"/>
    </location>
</feature>
<accession>Q7M8D7</accession>
<evidence type="ECO:0000255" key="1">
    <source>
        <dbReference type="HAMAP-Rule" id="MF_01320"/>
    </source>
</evidence>
<evidence type="ECO:0000256" key="2">
    <source>
        <dbReference type="SAM" id="MobiDB-lite"/>
    </source>
</evidence>
<evidence type="ECO:0000305" key="3"/>
<organism>
    <name type="scientific">Wolinella succinogenes (strain ATCC 29543 / DSM 1740 / CCUG 13145 / JCM 31913 / LMG 7466 / NCTC 11488 / FDC 602W)</name>
    <name type="common">Vibrio succinogenes</name>
    <dbReference type="NCBI Taxonomy" id="273121"/>
    <lineage>
        <taxon>Bacteria</taxon>
        <taxon>Pseudomonadati</taxon>
        <taxon>Campylobacterota</taxon>
        <taxon>Epsilonproteobacteria</taxon>
        <taxon>Campylobacterales</taxon>
        <taxon>Helicobacteraceae</taxon>
        <taxon>Wolinella</taxon>
    </lineage>
</organism>
<keyword id="KW-1185">Reference proteome</keyword>
<keyword id="KW-0687">Ribonucleoprotein</keyword>
<keyword id="KW-0689">Ribosomal protein</keyword>
<keyword id="KW-0694">RNA-binding</keyword>
<keyword id="KW-0699">rRNA-binding</keyword>
<protein>
    <recommendedName>
        <fullName evidence="1">Large ribosomal subunit protein uL2</fullName>
    </recommendedName>
    <alternativeName>
        <fullName evidence="3">50S ribosomal protein L2</fullName>
    </alternativeName>
</protein>
<dbReference type="EMBL" id="BX571661">
    <property type="protein sequence ID" value="CAE10739.1"/>
    <property type="molecule type" value="Genomic_DNA"/>
</dbReference>
<dbReference type="RefSeq" id="WP_011139523.1">
    <property type="nucleotide sequence ID" value="NC_005090.1"/>
</dbReference>
<dbReference type="SMR" id="Q7M8D7"/>
<dbReference type="STRING" id="273121.WS1713"/>
<dbReference type="KEGG" id="wsu:WS1713"/>
<dbReference type="eggNOG" id="COG0090">
    <property type="taxonomic scope" value="Bacteria"/>
</dbReference>
<dbReference type="HOGENOM" id="CLU_036235_2_1_7"/>
<dbReference type="Proteomes" id="UP000000422">
    <property type="component" value="Chromosome"/>
</dbReference>
<dbReference type="GO" id="GO:0015934">
    <property type="term" value="C:large ribosomal subunit"/>
    <property type="evidence" value="ECO:0007669"/>
    <property type="project" value="InterPro"/>
</dbReference>
<dbReference type="GO" id="GO:0019843">
    <property type="term" value="F:rRNA binding"/>
    <property type="evidence" value="ECO:0007669"/>
    <property type="project" value="UniProtKB-UniRule"/>
</dbReference>
<dbReference type="GO" id="GO:0003735">
    <property type="term" value="F:structural constituent of ribosome"/>
    <property type="evidence" value="ECO:0007669"/>
    <property type="project" value="InterPro"/>
</dbReference>
<dbReference type="GO" id="GO:0016740">
    <property type="term" value="F:transferase activity"/>
    <property type="evidence" value="ECO:0007669"/>
    <property type="project" value="InterPro"/>
</dbReference>
<dbReference type="GO" id="GO:0002181">
    <property type="term" value="P:cytoplasmic translation"/>
    <property type="evidence" value="ECO:0007669"/>
    <property type="project" value="TreeGrafter"/>
</dbReference>
<dbReference type="FunFam" id="2.30.30.30:FF:000001">
    <property type="entry name" value="50S ribosomal protein L2"/>
    <property type="match status" value="1"/>
</dbReference>
<dbReference type="FunFam" id="2.40.50.140:FF:000003">
    <property type="entry name" value="50S ribosomal protein L2"/>
    <property type="match status" value="1"/>
</dbReference>
<dbReference type="FunFam" id="4.10.950.10:FF:000001">
    <property type="entry name" value="50S ribosomal protein L2"/>
    <property type="match status" value="1"/>
</dbReference>
<dbReference type="Gene3D" id="2.30.30.30">
    <property type="match status" value="1"/>
</dbReference>
<dbReference type="Gene3D" id="2.40.50.140">
    <property type="entry name" value="Nucleic acid-binding proteins"/>
    <property type="match status" value="1"/>
</dbReference>
<dbReference type="Gene3D" id="4.10.950.10">
    <property type="entry name" value="Ribosomal protein L2, domain 3"/>
    <property type="match status" value="1"/>
</dbReference>
<dbReference type="HAMAP" id="MF_01320_B">
    <property type="entry name" value="Ribosomal_uL2_B"/>
    <property type="match status" value="1"/>
</dbReference>
<dbReference type="InterPro" id="IPR012340">
    <property type="entry name" value="NA-bd_OB-fold"/>
</dbReference>
<dbReference type="InterPro" id="IPR014722">
    <property type="entry name" value="Rib_uL2_dom2"/>
</dbReference>
<dbReference type="InterPro" id="IPR002171">
    <property type="entry name" value="Ribosomal_uL2"/>
</dbReference>
<dbReference type="InterPro" id="IPR005880">
    <property type="entry name" value="Ribosomal_uL2_bac/org-type"/>
</dbReference>
<dbReference type="InterPro" id="IPR022669">
    <property type="entry name" value="Ribosomal_uL2_C"/>
</dbReference>
<dbReference type="InterPro" id="IPR022671">
    <property type="entry name" value="Ribosomal_uL2_CS"/>
</dbReference>
<dbReference type="InterPro" id="IPR014726">
    <property type="entry name" value="Ribosomal_uL2_dom3"/>
</dbReference>
<dbReference type="InterPro" id="IPR022666">
    <property type="entry name" value="Ribosomal_uL2_RNA-bd_dom"/>
</dbReference>
<dbReference type="InterPro" id="IPR008991">
    <property type="entry name" value="Translation_prot_SH3-like_sf"/>
</dbReference>
<dbReference type="NCBIfam" id="TIGR01171">
    <property type="entry name" value="rplB_bact"/>
    <property type="match status" value="1"/>
</dbReference>
<dbReference type="PANTHER" id="PTHR13691:SF5">
    <property type="entry name" value="LARGE RIBOSOMAL SUBUNIT PROTEIN UL2M"/>
    <property type="match status" value="1"/>
</dbReference>
<dbReference type="PANTHER" id="PTHR13691">
    <property type="entry name" value="RIBOSOMAL PROTEIN L2"/>
    <property type="match status" value="1"/>
</dbReference>
<dbReference type="Pfam" id="PF00181">
    <property type="entry name" value="Ribosomal_L2"/>
    <property type="match status" value="1"/>
</dbReference>
<dbReference type="Pfam" id="PF03947">
    <property type="entry name" value="Ribosomal_L2_C"/>
    <property type="match status" value="1"/>
</dbReference>
<dbReference type="PIRSF" id="PIRSF002158">
    <property type="entry name" value="Ribosomal_L2"/>
    <property type="match status" value="1"/>
</dbReference>
<dbReference type="SMART" id="SM01383">
    <property type="entry name" value="Ribosomal_L2"/>
    <property type="match status" value="1"/>
</dbReference>
<dbReference type="SMART" id="SM01382">
    <property type="entry name" value="Ribosomal_L2_C"/>
    <property type="match status" value="1"/>
</dbReference>
<dbReference type="SUPFAM" id="SSF50249">
    <property type="entry name" value="Nucleic acid-binding proteins"/>
    <property type="match status" value="1"/>
</dbReference>
<dbReference type="SUPFAM" id="SSF50104">
    <property type="entry name" value="Translation proteins SH3-like domain"/>
    <property type="match status" value="1"/>
</dbReference>
<dbReference type="PROSITE" id="PS00467">
    <property type="entry name" value="RIBOSOMAL_L2"/>
    <property type="match status" value="1"/>
</dbReference>
<reference key="1">
    <citation type="journal article" date="2003" name="Proc. Natl. Acad. Sci. U.S.A.">
        <title>Complete genome sequence and analysis of Wolinella succinogenes.</title>
        <authorList>
            <person name="Baar C."/>
            <person name="Eppinger M."/>
            <person name="Raddatz G."/>
            <person name="Simon J."/>
            <person name="Lanz C."/>
            <person name="Klimmek O."/>
            <person name="Nandakumar R."/>
            <person name="Gross R."/>
            <person name="Rosinus A."/>
            <person name="Keller H."/>
            <person name="Jagtap P."/>
            <person name="Linke B."/>
            <person name="Meyer F."/>
            <person name="Lederer H."/>
            <person name="Schuster S.C."/>
        </authorList>
    </citation>
    <scope>NUCLEOTIDE SEQUENCE [LARGE SCALE GENOMIC DNA]</scope>
    <source>
        <strain>ATCC 29543 / DSM 1740 / CCUG 13145 / JCM 31913 / LMG 7466 / NCTC 11488 / FDC 602W</strain>
    </source>
</reference>
<name>RL2_WOLSU</name>
<gene>
    <name evidence="1" type="primary">rplB</name>
    <name type="ordered locus">WS1713</name>
</gene>
<proteinExistence type="inferred from homology"/>
<sequence length="275" mass="29979">MAIKTYKPYTPSRRFMTGLSSSDITSKPSVRSLLMKLPVTAGRNNNGRITSRHKEGGAKKLYRIIDFKRNKFNIEGTVSAIEYDPYRNCRIALVTYKDGEKRYIIQPTGLAVGDLVISAEGGLDIKTGYAMKLKNIPIGTIIHNIELHPGAGGQLARSAGASAQIMGREGKYTIIRMPSGEMRYILEECMATIGTVGNADFANISIGKAGRNRHRGIRPQTRGAAMNPVDHPHGGGEGKTGSSGHPVSPWGMPAKGFKTRKKKASDKLIISRRKK</sequence>